<reference key="1">
    <citation type="journal article" date="2005" name="Nature">
        <title>The genome of the social amoeba Dictyostelium discoideum.</title>
        <authorList>
            <person name="Eichinger L."/>
            <person name="Pachebat J.A."/>
            <person name="Gloeckner G."/>
            <person name="Rajandream M.A."/>
            <person name="Sucgang R."/>
            <person name="Berriman M."/>
            <person name="Song J."/>
            <person name="Olsen R."/>
            <person name="Szafranski K."/>
            <person name="Xu Q."/>
            <person name="Tunggal B."/>
            <person name="Kummerfeld S."/>
            <person name="Madera M."/>
            <person name="Konfortov B.A."/>
            <person name="Rivero F."/>
            <person name="Bankier A.T."/>
            <person name="Lehmann R."/>
            <person name="Hamlin N."/>
            <person name="Davies R."/>
            <person name="Gaudet P."/>
            <person name="Fey P."/>
            <person name="Pilcher K."/>
            <person name="Chen G."/>
            <person name="Saunders D."/>
            <person name="Sodergren E.J."/>
            <person name="Davis P."/>
            <person name="Kerhornou A."/>
            <person name="Nie X."/>
            <person name="Hall N."/>
            <person name="Anjard C."/>
            <person name="Hemphill L."/>
            <person name="Bason N."/>
            <person name="Farbrother P."/>
            <person name="Desany B."/>
            <person name="Just E."/>
            <person name="Morio T."/>
            <person name="Rost R."/>
            <person name="Churcher C.M."/>
            <person name="Cooper J."/>
            <person name="Haydock S."/>
            <person name="van Driessche N."/>
            <person name="Cronin A."/>
            <person name="Goodhead I."/>
            <person name="Muzny D.M."/>
            <person name="Mourier T."/>
            <person name="Pain A."/>
            <person name="Lu M."/>
            <person name="Harper D."/>
            <person name="Lindsay R."/>
            <person name="Hauser H."/>
            <person name="James K.D."/>
            <person name="Quiles M."/>
            <person name="Madan Babu M."/>
            <person name="Saito T."/>
            <person name="Buchrieser C."/>
            <person name="Wardroper A."/>
            <person name="Felder M."/>
            <person name="Thangavelu M."/>
            <person name="Johnson D."/>
            <person name="Knights A."/>
            <person name="Loulseged H."/>
            <person name="Mungall K.L."/>
            <person name="Oliver K."/>
            <person name="Price C."/>
            <person name="Quail M.A."/>
            <person name="Urushihara H."/>
            <person name="Hernandez J."/>
            <person name="Rabbinowitsch E."/>
            <person name="Steffen D."/>
            <person name="Sanders M."/>
            <person name="Ma J."/>
            <person name="Kohara Y."/>
            <person name="Sharp S."/>
            <person name="Simmonds M.N."/>
            <person name="Spiegler S."/>
            <person name="Tivey A."/>
            <person name="Sugano S."/>
            <person name="White B."/>
            <person name="Walker D."/>
            <person name="Woodward J.R."/>
            <person name="Winckler T."/>
            <person name="Tanaka Y."/>
            <person name="Shaulsky G."/>
            <person name="Schleicher M."/>
            <person name="Weinstock G.M."/>
            <person name="Rosenthal A."/>
            <person name="Cox E.C."/>
            <person name="Chisholm R.L."/>
            <person name="Gibbs R.A."/>
            <person name="Loomis W.F."/>
            <person name="Platzer M."/>
            <person name="Kay R.R."/>
            <person name="Williams J.G."/>
            <person name="Dear P.H."/>
            <person name="Noegel A.A."/>
            <person name="Barrell B.G."/>
            <person name="Kuspa A."/>
        </authorList>
    </citation>
    <scope>NUCLEOTIDE SEQUENCE [LARGE SCALE GENOMIC DNA]</scope>
    <source>
        <strain>AX4</strain>
    </source>
</reference>
<feature type="chain" id="PRO_0000348499" description="Uncharacterized protein DDB_G0285917">
    <location>
        <begin position="1"/>
        <end position="205"/>
    </location>
</feature>
<feature type="region of interest" description="Disordered" evidence="1">
    <location>
        <begin position="1"/>
        <end position="205"/>
    </location>
</feature>
<feature type="compositionally biased region" description="Polar residues" evidence="1">
    <location>
        <begin position="1"/>
        <end position="25"/>
    </location>
</feature>
<feature type="compositionally biased region" description="Low complexity" evidence="1">
    <location>
        <begin position="32"/>
        <end position="79"/>
    </location>
</feature>
<feature type="compositionally biased region" description="Basic and acidic residues" evidence="1">
    <location>
        <begin position="80"/>
        <end position="122"/>
    </location>
</feature>
<feature type="compositionally biased region" description="Low complexity" evidence="1">
    <location>
        <begin position="123"/>
        <end position="132"/>
    </location>
</feature>
<feature type="compositionally biased region" description="Low complexity" evidence="1">
    <location>
        <begin position="146"/>
        <end position="162"/>
    </location>
</feature>
<feature type="compositionally biased region" description="Basic and acidic residues" evidence="1">
    <location>
        <begin position="170"/>
        <end position="185"/>
    </location>
</feature>
<feature type="compositionally biased region" description="Polar residues" evidence="1">
    <location>
        <begin position="194"/>
        <end position="205"/>
    </location>
</feature>
<organism>
    <name type="scientific">Dictyostelium discoideum</name>
    <name type="common">Social amoeba</name>
    <dbReference type="NCBI Taxonomy" id="44689"/>
    <lineage>
        <taxon>Eukaryota</taxon>
        <taxon>Amoebozoa</taxon>
        <taxon>Evosea</taxon>
        <taxon>Eumycetozoa</taxon>
        <taxon>Dictyostelia</taxon>
        <taxon>Dictyosteliales</taxon>
        <taxon>Dictyosteliaceae</taxon>
        <taxon>Dictyostelium</taxon>
    </lineage>
</organism>
<protein>
    <recommendedName>
        <fullName>Uncharacterized protein DDB_G0285917</fullName>
    </recommendedName>
</protein>
<keyword id="KW-1185">Reference proteome</keyword>
<evidence type="ECO:0000256" key="1">
    <source>
        <dbReference type="SAM" id="MobiDB-lite"/>
    </source>
</evidence>
<proteinExistence type="predicted"/>
<dbReference type="EMBL" id="AAFI02000082">
    <property type="protein sequence ID" value="EAL64493.1"/>
    <property type="molecule type" value="Genomic_DNA"/>
</dbReference>
<dbReference type="RefSeq" id="XP_638003.1">
    <property type="nucleotide sequence ID" value="XM_632911.1"/>
</dbReference>
<dbReference type="SMR" id="Q54MI7"/>
<dbReference type="PaxDb" id="44689-DDB0186747"/>
<dbReference type="EnsemblProtists" id="EAL64493">
    <property type="protein sequence ID" value="EAL64493"/>
    <property type="gene ID" value="DDB_G0285917"/>
</dbReference>
<dbReference type="GeneID" id="8625354"/>
<dbReference type="KEGG" id="ddi:DDB_G0285917"/>
<dbReference type="dictyBase" id="DDB_G0285917"/>
<dbReference type="VEuPathDB" id="AmoebaDB:DDB_G0285917"/>
<dbReference type="HOGENOM" id="CLU_1339664_0_0_1"/>
<dbReference type="InParanoid" id="Q54MI7"/>
<dbReference type="OMA" id="NENNSCE"/>
<dbReference type="PRO" id="PR:Q54MI7"/>
<dbReference type="Proteomes" id="UP000002195">
    <property type="component" value="Chromosome 4"/>
</dbReference>
<sequence length="205" mass="22921">MSNNNNEAQQPVESTNVESQQNVVQSDCPVVNENNDNNNNNNNNNNNNNNNNNNNNNNNNSNNNNNSSNNENNENNENNSCEKSEQEKPKEPEEPVQEEKSKEPCDQQKVKENEPAEEKETEPAAPVEPENPLSNDSAASEKLQEQHQQQNHEPQQTSNGESNEADANESENKKRSIDEAGDIKDGKKRKVETVETSDPAQQVEA</sequence>
<gene>
    <name type="ORF">DDB_G0285917</name>
</gene>
<accession>Q54MI7</accession>
<name>Y6747_DICDI</name>